<organism>
    <name type="scientific">Francisella tularensis subsp. holarctica (strain LVS)</name>
    <dbReference type="NCBI Taxonomy" id="376619"/>
    <lineage>
        <taxon>Bacteria</taxon>
        <taxon>Pseudomonadati</taxon>
        <taxon>Pseudomonadota</taxon>
        <taxon>Gammaproteobacteria</taxon>
        <taxon>Thiotrichales</taxon>
        <taxon>Francisellaceae</taxon>
        <taxon>Francisella</taxon>
    </lineage>
</organism>
<reference key="1">
    <citation type="submission" date="2006-03" db="EMBL/GenBank/DDBJ databases">
        <title>Complete genome sequence of Francisella tularensis LVS (Live Vaccine Strain).</title>
        <authorList>
            <person name="Chain P."/>
            <person name="Larimer F."/>
            <person name="Land M."/>
            <person name="Stilwagen S."/>
            <person name="Larsson P."/>
            <person name="Bearden S."/>
            <person name="Chu M."/>
            <person name="Oyston P."/>
            <person name="Forsman M."/>
            <person name="Andersson S."/>
            <person name="Lindler L."/>
            <person name="Titball R."/>
            <person name="Garcia E."/>
        </authorList>
    </citation>
    <scope>NUCLEOTIDE SEQUENCE [LARGE SCALE GENOMIC DNA]</scope>
    <source>
        <strain>LVS</strain>
    </source>
</reference>
<keyword id="KW-0067">ATP-binding</keyword>
<keyword id="KW-0963">Cytoplasm</keyword>
<keyword id="KW-0418">Kinase</keyword>
<keyword id="KW-0547">Nucleotide-binding</keyword>
<keyword id="KW-1185">Reference proteome</keyword>
<keyword id="KW-0808">Transferase</keyword>
<protein>
    <recommendedName>
        <fullName evidence="1">Guanylate kinase</fullName>
        <ecNumber evidence="1">2.7.4.8</ecNumber>
    </recommendedName>
    <alternativeName>
        <fullName evidence="1">GMP kinase</fullName>
    </alternativeName>
</protein>
<evidence type="ECO:0000255" key="1">
    <source>
        <dbReference type="HAMAP-Rule" id="MF_00328"/>
    </source>
</evidence>
<proteinExistence type="inferred from homology"/>
<dbReference type="EC" id="2.7.4.8" evidence="1"/>
<dbReference type="EMBL" id="AM233362">
    <property type="protein sequence ID" value="CAJ79830.1"/>
    <property type="molecule type" value="Genomic_DNA"/>
</dbReference>
<dbReference type="RefSeq" id="WP_003016638.1">
    <property type="nucleotide sequence ID" value="NZ_CP009694.1"/>
</dbReference>
<dbReference type="SMR" id="Q2A2K6"/>
<dbReference type="KEGG" id="ftl:FTL_1391"/>
<dbReference type="Proteomes" id="UP000001944">
    <property type="component" value="Chromosome"/>
</dbReference>
<dbReference type="GO" id="GO:0005829">
    <property type="term" value="C:cytosol"/>
    <property type="evidence" value="ECO:0007669"/>
    <property type="project" value="TreeGrafter"/>
</dbReference>
<dbReference type="GO" id="GO:0005524">
    <property type="term" value="F:ATP binding"/>
    <property type="evidence" value="ECO:0007669"/>
    <property type="project" value="UniProtKB-UniRule"/>
</dbReference>
<dbReference type="GO" id="GO:0004385">
    <property type="term" value="F:guanylate kinase activity"/>
    <property type="evidence" value="ECO:0007669"/>
    <property type="project" value="UniProtKB-UniRule"/>
</dbReference>
<dbReference type="CDD" id="cd00071">
    <property type="entry name" value="GMPK"/>
    <property type="match status" value="1"/>
</dbReference>
<dbReference type="FunFam" id="3.30.63.10:FF:000005">
    <property type="entry name" value="Guanylate kinase"/>
    <property type="match status" value="1"/>
</dbReference>
<dbReference type="Gene3D" id="3.30.63.10">
    <property type="entry name" value="Guanylate Kinase phosphate binding domain"/>
    <property type="match status" value="1"/>
</dbReference>
<dbReference type="Gene3D" id="3.40.50.300">
    <property type="entry name" value="P-loop containing nucleotide triphosphate hydrolases"/>
    <property type="match status" value="1"/>
</dbReference>
<dbReference type="HAMAP" id="MF_00328">
    <property type="entry name" value="Guanylate_kinase"/>
    <property type="match status" value="1"/>
</dbReference>
<dbReference type="InterPro" id="IPR008145">
    <property type="entry name" value="GK/Ca_channel_bsu"/>
</dbReference>
<dbReference type="InterPro" id="IPR008144">
    <property type="entry name" value="Guanylate_kin-like_dom"/>
</dbReference>
<dbReference type="InterPro" id="IPR017665">
    <property type="entry name" value="Guanylate_kinase"/>
</dbReference>
<dbReference type="InterPro" id="IPR027417">
    <property type="entry name" value="P-loop_NTPase"/>
</dbReference>
<dbReference type="NCBIfam" id="TIGR03263">
    <property type="entry name" value="guanyl_kin"/>
    <property type="match status" value="1"/>
</dbReference>
<dbReference type="PANTHER" id="PTHR23117:SF13">
    <property type="entry name" value="GUANYLATE KINASE"/>
    <property type="match status" value="1"/>
</dbReference>
<dbReference type="PANTHER" id="PTHR23117">
    <property type="entry name" value="GUANYLATE KINASE-RELATED"/>
    <property type="match status" value="1"/>
</dbReference>
<dbReference type="Pfam" id="PF00625">
    <property type="entry name" value="Guanylate_kin"/>
    <property type="match status" value="1"/>
</dbReference>
<dbReference type="SMART" id="SM00072">
    <property type="entry name" value="GuKc"/>
    <property type="match status" value="1"/>
</dbReference>
<dbReference type="SUPFAM" id="SSF52540">
    <property type="entry name" value="P-loop containing nucleoside triphosphate hydrolases"/>
    <property type="match status" value="1"/>
</dbReference>
<dbReference type="PROSITE" id="PS50052">
    <property type="entry name" value="GUANYLATE_KINASE_2"/>
    <property type="match status" value="1"/>
</dbReference>
<gene>
    <name evidence="1" type="primary">gmk</name>
    <name type="ordered locus">FTL_1391</name>
</gene>
<comment type="function">
    <text evidence="1">Essential for recycling GMP and indirectly, cGMP.</text>
</comment>
<comment type="catalytic activity">
    <reaction evidence="1">
        <text>GMP + ATP = GDP + ADP</text>
        <dbReference type="Rhea" id="RHEA:20780"/>
        <dbReference type="ChEBI" id="CHEBI:30616"/>
        <dbReference type="ChEBI" id="CHEBI:58115"/>
        <dbReference type="ChEBI" id="CHEBI:58189"/>
        <dbReference type="ChEBI" id="CHEBI:456216"/>
        <dbReference type="EC" id="2.7.4.8"/>
    </reaction>
</comment>
<comment type="subcellular location">
    <subcellularLocation>
        <location evidence="1">Cytoplasm</location>
    </subcellularLocation>
</comment>
<comment type="similarity">
    <text evidence="1">Belongs to the guanylate kinase family.</text>
</comment>
<accession>Q2A2K6</accession>
<sequence length="190" mass="21866">MNNYIFIISAPSGAGKSSLLKAFLATDIGKDNYAVAISHTTREPRVGEINSREYYFVTVAEFEQLLSQDGFIEYAKVFKNYYGTSKAELDRLLALGKNIILEIDWQGAQQTRAIYGDRAKSIFILPPSLDELRKRLEKRNTDSKETIDYRMEQVQSEISHADEYDYLLVNDDFSQSLEQLCKYFEQNIQS</sequence>
<name>KGUA_FRATH</name>
<feature type="chain" id="PRO_0000266325" description="Guanylate kinase">
    <location>
        <begin position="1"/>
        <end position="190"/>
    </location>
</feature>
<feature type="domain" description="Guanylate kinase-like" evidence="1">
    <location>
        <begin position="3"/>
        <end position="185"/>
    </location>
</feature>
<feature type="binding site" evidence="1">
    <location>
        <begin position="10"/>
        <end position="17"/>
    </location>
    <ligand>
        <name>ATP</name>
        <dbReference type="ChEBI" id="CHEBI:30616"/>
    </ligand>
</feature>